<organism>
    <name type="scientific">Listeria monocytogenes serotype 4a (strain HCC23)</name>
    <dbReference type="NCBI Taxonomy" id="552536"/>
    <lineage>
        <taxon>Bacteria</taxon>
        <taxon>Bacillati</taxon>
        <taxon>Bacillota</taxon>
        <taxon>Bacilli</taxon>
        <taxon>Bacillales</taxon>
        <taxon>Listeriaceae</taxon>
        <taxon>Listeria</taxon>
    </lineage>
</organism>
<evidence type="ECO:0000255" key="1">
    <source>
        <dbReference type="HAMAP-Rule" id="MF_00171"/>
    </source>
</evidence>
<feature type="chain" id="PRO_1000194560" description="tRNA pseudouridine synthase A">
    <location>
        <begin position="1"/>
        <end position="248"/>
    </location>
</feature>
<feature type="active site" description="Nucleophile" evidence="1">
    <location>
        <position position="53"/>
    </location>
</feature>
<feature type="binding site" evidence="1">
    <location>
        <position position="111"/>
    </location>
    <ligand>
        <name>substrate</name>
    </ligand>
</feature>
<reference key="1">
    <citation type="journal article" date="2011" name="J. Bacteriol.">
        <title>Genome sequence of lineage III Listeria monocytogenes strain HCC23.</title>
        <authorList>
            <person name="Steele C.L."/>
            <person name="Donaldson J.R."/>
            <person name="Paul D."/>
            <person name="Banes M.M."/>
            <person name="Arick T."/>
            <person name="Bridges S.M."/>
            <person name="Lawrence M.L."/>
        </authorList>
    </citation>
    <scope>NUCLEOTIDE SEQUENCE [LARGE SCALE GENOMIC DNA]</scope>
    <source>
        <strain>HCC23</strain>
    </source>
</reference>
<protein>
    <recommendedName>
        <fullName evidence="1">tRNA pseudouridine synthase A</fullName>
        <ecNumber evidence="1">5.4.99.12</ecNumber>
    </recommendedName>
    <alternativeName>
        <fullName evidence="1">tRNA pseudouridine(38-40) synthase</fullName>
    </alternativeName>
    <alternativeName>
        <fullName evidence="1">tRNA pseudouridylate synthase I</fullName>
    </alternativeName>
    <alternativeName>
        <fullName evidence="1">tRNA-uridine isomerase I</fullName>
    </alternativeName>
</protein>
<sequence length="248" mass="28413">MTRYKAIISYDGSGFYGYQVQPNTRTVQAEIEKALTKMHKGKTVRITASGRTDTGVHAKGQVIHFDSELDITAEKFQKALQVMTPFDISFLTVEEVPDDFHARFGTVGKEYRYVVKRTKIFDPFSRDFALHYPYELDISKMKLASKRLIGEHDFTSFCSARTERDSKVRTLYSIDFYEEDDETLVIAFQGNGFLYNMVRILTGTLLDAGQGRISPDDISKALLARDRQKLISKTAPPQGLYLWRVDYE</sequence>
<gene>
    <name evidence="1" type="primary">truA</name>
    <name type="ordered locus">LMHCC_2936</name>
</gene>
<keyword id="KW-0413">Isomerase</keyword>
<keyword id="KW-0819">tRNA processing</keyword>
<proteinExistence type="inferred from homology"/>
<comment type="function">
    <text evidence="1">Formation of pseudouridine at positions 38, 39 and 40 in the anticodon stem and loop of transfer RNAs.</text>
</comment>
<comment type="catalytic activity">
    <reaction evidence="1">
        <text>uridine(38/39/40) in tRNA = pseudouridine(38/39/40) in tRNA</text>
        <dbReference type="Rhea" id="RHEA:22376"/>
        <dbReference type="Rhea" id="RHEA-COMP:10085"/>
        <dbReference type="Rhea" id="RHEA-COMP:10087"/>
        <dbReference type="ChEBI" id="CHEBI:65314"/>
        <dbReference type="ChEBI" id="CHEBI:65315"/>
        <dbReference type="EC" id="5.4.99.12"/>
    </reaction>
</comment>
<comment type="subunit">
    <text evidence="1">Homodimer.</text>
</comment>
<comment type="similarity">
    <text evidence="1">Belongs to the tRNA pseudouridine synthase TruA family.</text>
</comment>
<dbReference type="EC" id="5.4.99.12" evidence="1"/>
<dbReference type="EMBL" id="CP001175">
    <property type="protein sequence ID" value="ACK41267.1"/>
    <property type="molecule type" value="Genomic_DNA"/>
</dbReference>
<dbReference type="RefSeq" id="WP_012582370.1">
    <property type="nucleotide sequence ID" value="NC_011660.1"/>
</dbReference>
<dbReference type="SMR" id="B8DB42"/>
<dbReference type="KEGG" id="lmh:LMHCC_2936"/>
<dbReference type="HOGENOM" id="CLU_014673_0_1_9"/>
<dbReference type="GO" id="GO:0003723">
    <property type="term" value="F:RNA binding"/>
    <property type="evidence" value="ECO:0007669"/>
    <property type="project" value="InterPro"/>
</dbReference>
<dbReference type="GO" id="GO:0160147">
    <property type="term" value="F:tRNA pseudouridine(38-40) synthase activity"/>
    <property type="evidence" value="ECO:0007669"/>
    <property type="project" value="UniProtKB-EC"/>
</dbReference>
<dbReference type="GO" id="GO:0031119">
    <property type="term" value="P:tRNA pseudouridine synthesis"/>
    <property type="evidence" value="ECO:0007669"/>
    <property type="project" value="UniProtKB-UniRule"/>
</dbReference>
<dbReference type="CDD" id="cd02570">
    <property type="entry name" value="PseudoU_synth_EcTruA"/>
    <property type="match status" value="1"/>
</dbReference>
<dbReference type="FunFam" id="3.30.70.580:FF:000001">
    <property type="entry name" value="tRNA pseudouridine synthase A"/>
    <property type="match status" value="1"/>
</dbReference>
<dbReference type="FunFam" id="3.30.70.660:FF:000004">
    <property type="entry name" value="tRNA pseudouridine synthase A"/>
    <property type="match status" value="1"/>
</dbReference>
<dbReference type="Gene3D" id="3.30.70.660">
    <property type="entry name" value="Pseudouridine synthase I, catalytic domain, C-terminal subdomain"/>
    <property type="match status" value="1"/>
</dbReference>
<dbReference type="Gene3D" id="3.30.70.580">
    <property type="entry name" value="Pseudouridine synthase I, catalytic domain, N-terminal subdomain"/>
    <property type="match status" value="1"/>
</dbReference>
<dbReference type="HAMAP" id="MF_00171">
    <property type="entry name" value="TruA"/>
    <property type="match status" value="1"/>
</dbReference>
<dbReference type="InterPro" id="IPR020103">
    <property type="entry name" value="PsdUridine_synth_cat_dom_sf"/>
</dbReference>
<dbReference type="InterPro" id="IPR001406">
    <property type="entry name" value="PsdUridine_synth_TruA"/>
</dbReference>
<dbReference type="InterPro" id="IPR020097">
    <property type="entry name" value="PsdUridine_synth_TruA_a/b_dom"/>
</dbReference>
<dbReference type="InterPro" id="IPR020095">
    <property type="entry name" value="PsdUridine_synth_TruA_C"/>
</dbReference>
<dbReference type="InterPro" id="IPR020094">
    <property type="entry name" value="TruA/RsuA/RluB/E/F_N"/>
</dbReference>
<dbReference type="NCBIfam" id="TIGR00071">
    <property type="entry name" value="hisT_truA"/>
    <property type="match status" value="1"/>
</dbReference>
<dbReference type="PANTHER" id="PTHR11142">
    <property type="entry name" value="PSEUDOURIDYLATE SYNTHASE"/>
    <property type="match status" value="1"/>
</dbReference>
<dbReference type="PANTHER" id="PTHR11142:SF0">
    <property type="entry name" value="TRNA PSEUDOURIDINE SYNTHASE-LIKE 1"/>
    <property type="match status" value="1"/>
</dbReference>
<dbReference type="Pfam" id="PF01416">
    <property type="entry name" value="PseudoU_synth_1"/>
    <property type="match status" value="2"/>
</dbReference>
<dbReference type="PIRSF" id="PIRSF001430">
    <property type="entry name" value="tRNA_psdUrid_synth"/>
    <property type="match status" value="1"/>
</dbReference>
<dbReference type="SUPFAM" id="SSF55120">
    <property type="entry name" value="Pseudouridine synthase"/>
    <property type="match status" value="1"/>
</dbReference>
<accession>B8DB42</accession>
<name>TRUA_LISMH</name>